<sequence>MFKNSFQSGFLSILYSIGSKPLQIWDKQIKNGHIKRITDQDIQSSVLEIMGTNVSTNFITAPADPKETLGIKLPFLVMIIKNLKKYFTFEVQVLDDKNVRRRFRASNYQSTTRVKPFICTMPMRLDEGWNQIQFNLSDFTRRAYGTNYIETLRVQIHANCRIRRIYFSDRLYSEEELPPEFKLFLPIQKQG</sequence>
<name>CFA20_PARTE</name>
<proteinExistence type="inferred from homology"/>
<feature type="chain" id="PRO_0000430500" description="Cilia- and flagella-associated protein 20">
    <location>
        <begin position="1"/>
        <end position="191"/>
    </location>
</feature>
<reference key="1">
    <citation type="journal article" date="2006" name="Nature">
        <title>Global trends of whole-genome duplications revealed by the ciliate Paramecium tetraurelia.</title>
        <authorList>
            <person name="Aury J.-M."/>
            <person name="Jaillon O."/>
            <person name="Duret L."/>
            <person name="Noel B."/>
            <person name="Jubin C."/>
            <person name="Porcel B.M."/>
            <person name="Segurens B."/>
            <person name="Daubin V."/>
            <person name="Anthouard V."/>
            <person name="Aiach N."/>
            <person name="Arnaiz O."/>
            <person name="Billaut A."/>
            <person name="Beisson J."/>
            <person name="Blanc I."/>
            <person name="Bouhouche K."/>
            <person name="Camara F."/>
            <person name="Duharcourt S."/>
            <person name="Guigo R."/>
            <person name="Gogendeau D."/>
            <person name="Katinka M."/>
            <person name="Keller A.-M."/>
            <person name="Kissmehl R."/>
            <person name="Klotz C."/>
            <person name="Koll F."/>
            <person name="Le Mouel A."/>
            <person name="Lepere G."/>
            <person name="Malinsky S."/>
            <person name="Nowacki M."/>
            <person name="Nowak J.K."/>
            <person name="Plattner H."/>
            <person name="Poulain J."/>
            <person name="Ruiz F."/>
            <person name="Serrano V."/>
            <person name="Zagulski M."/>
            <person name="Dessen P."/>
            <person name="Betermier M."/>
            <person name="Weissenbach J."/>
            <person name="Scarpelli C."/>
            <person name="Schaechter V."/>
            <person name="Sperling L."/>
            <person name="Meyer E."/>
            <person name="Cohen J."/>
            <person name="Wincker P."/>
        </authorList>
    </citation>
    <scope>NUCLEOTIDE SEQUENCE [LARGE SCALE GENOMIC DNA]</scope>
    <source>
        <strain>Stock d4-2</strain>
    </source>
</reference>
<reference key="2">
    <citation type="journal article" date="2010" name="Eukaryot. Cell">
        <title>Bug22p, a conserved centrosomal/ciliary protein also present in higher plants, is required for an effective ciliary stroke in Paramecium.</title>
        <authorList>
            <person name="Laligne C."/>
            <person name="Klotz C."/>
            <person name="de Loubresse N.G."/>
            <person name="Lemullois M."/>
            <person name="Hori M."/>
            <person name="Laurent F.X."/>
            <person name="Papon J.F."/>
            <person name="Louis B."/>
            <person name="Cohen J."/>
            <person name="Koll F."/>
        </authorList>
    </citation>
    <scope>FUNCTION</scope>
    <scope>SUBCELLULAR LOCATION</scope>
</reference>
<organism>
    <name type="scientific">Paramecium tetraurelia</name>
    <dbReference type="NCBI Taxonomy" id="5888"/>
    <lineage>
        <taxon>Eukaryota</taxon>
        <taxon>Sar</taxon>
        <taxon>Alveolata</taxon>
        <taxon>Ciliophora</taxon>
        <taxon>Intramacronucleata</taxon>
        <taxon>Oligohymenophorea</taxon>
        <taxon>Peniculida</taxon>
        <taxon>Parameciidae</taxon>
        <taxon>Paramecium</taxon>
    </lineage>
</organism>
<comment type="function">
    <text evidence="1 2">Cilium- and flagellum-specific protein required for axonemal structure organization and motility (PubMed:20118210). Microtubule inner protein (MIP) part of the dynein-decorated doublet microtubules (DMTs) in cilia axoneme, which is required for motile cilia beating (By similarity). May also play a role in cortical organization of basal body.</text>
</comment>
<comment type="subcellular location">
    <subcellularLocation>
        <location evidence="2">Cytoplasm</location>
        <location evidence="2">Cytoskeleton</location>
        <location evidence="2">Cilium basal body</location>
    </subcellularLocation>
    <subcellularLocation>
        <location evidence="2">Cell projection</location>
        <location evidence="2">Cilium</location>
    </subcellularLocation>
    <subcellularLocation>
        <location evidence="1">Cytoplasm</location>
        <location evidence="1">Cytoskeleton</location>
        <location evidence="1">Cilium axoneme</location>
    </subcellularLocation>
    <text>Localizes preferentially in the terminal plate of the basal body and the transition zone of the cilium as well as in the vicinity of the outer doublets of axoneme and between the axoneme and the cell membrane.</text>
</comment>
<comment type="similarity">
    <text evidence="3">Belongs to the CFAP20 family.</text>
</comment>
<dbReference type="EMBL" id="CT868063">
    <property type="protein sequence ID" value="CAK68801.1"/>
    <property type="molecule type" value="Genomic_DNA"/>
</dbReference>
<dbReference type="EMBL" id="CT868263">
    <property type="protein sequence ID" value="CAK77302.1"/>
    <property type="molecule type" value="Genomic_DNA"/>
</dbReference>
<dbReference type="EMBL" id="CT868285">
    <property type="protein sequence ID" value="CAK77734.1"/>
    <property type="molecule type" value="Genomic_DNA"/>
</dbReference>
<dbReference type="EMBL" id="CT868418">
    <property type="protein sequence ID" value="CAK81845.1"/>
    <property type="molecule type" value="Genomic_DNA"/>
</dbReference>
<dbReference type="RefSeq" id="XP_001436198.1">
    <property type="nucleotide sequence ID" value="XM_001436161.1"/>
</dbReference>
<dbReference type="RefSeq" id="XP_001444699.1">
    <property type="nucleotide sequence ID" value="XM_001444662.1"/>
</dbReference>
<dbReference type="RefSeq" id="XP_001445131.1">
    <property type="nucleotide sequence ID" value="XM_001445094.1"/>
</dbReference>
<dbReference type="RefSeq" id="XP_001449242.1">
    <property type="nucleotide sequence ID" value="XM_001449205.1"/>
</dbReference>
<dbReference type="SMR" id="A0CDD4"/>
<dbReference type="FunCoup" id="A0CDD4">
    <property type="interactions" value="259"/>
</dbReference>
<dbReference type="STRING" id="5888.A0CDD4"/>
<dbReference type="EnsemblProtists" id="CAK68801">
    <property type="protein sequence ID" value="CAK68801"/>
    <property type="gene ID" value="GSPATT00007012001"/>
</dbReference>
<dbReference type="EnsemblProtists" id="CAK77302">
    <property type="protein sequence ID" value="CAK77302"/>
    <property type="gene ID" value="GSPATT00012810001"/>
</dbReference>
<dbReference type="EnsemblProtists" id="CAK77734">
    <property type="protein sequence ID" value="CAK77734"/>
    <property type="gene ID" value="GSPATT00013199001"/>
</dbReference>
<dbReference type="EnsemblProtists" id="CAK81845">
    <property type="protein sequence ID" value="CAK81845"/>
    <property type="gene ID" value="GSPATT00016658001"/>
</dbReference>
<dbReference type="GeneID" id="5021983"/>
<dbReference type="GeneID" id="5030483"/>
<dbReference type="GeneID" id="5030916"/>
<dbReference type="GeneID" id="5035027"/>
<dbReference type="KEGG" id="ptm:GSPATT00007012001"/>
<dbReference type="KEGG" id="ptm:GSPATT00012810001"/>
<dbReference type="KEGG" id="ptm:GSPATT00013199001"/>
<dbReference type="KEGG" id="ptm:GSPATT00016658001"/>
<dbReference type="eggNOG" id="KOG3213">
    <property type="taxonomic scope" value="Eukaryota"/>
</dbReference>
<dbReference type="HOGENOM" id="CLU_060610_1_1_1"/>
<dbReference type="InParanoid" id="A0CDD4"/>
<dbReference type="OMA" id="TTYISCP"/>
<dbReference type="OrthoDB" id="289743at2759"/>
<dbReference type="Proteomes" id="UP000000600">
    <property type="component" value="Partially assembled WGS sequence"/>
</dbReference>
<dbReference type="GO" id="GO:0036064">
    <property type="term" value="C:ciliary basal body"/>
    <property type="evidence" value="ECO:0000314"/>
    <property type="project" value="UniProtKB"/>
</dbReference>
<dbReference type="GO" id="GO:0005929">
    <property type="term" value="C:cilium"/>
    <property type="evidence" value="ECO:0000314"/>
    <property type="project" value="UniProtKB"/>
</dbReference>
<dbReference type="GO" id="GO:0005737">
    <property type="term" value="C:cytoplasm"/>
    <property type="evidence" value="ECO:0007669"/>
    <property type="project" value="UniProtKB-KW"/>
</dbReference>
<dbReference type="GO" id="GO:0005874">
    <property type="term" value="C:microtubule"/>
    <property type="evidence" value="ECO:0007669"/>
    <property type="project" value="UniProtKB-KW"/>
</dbReference>
<dbReference type="GO" id="GO:0031514">
    <property type="term" value="C:motile cilium"/>
    <property type="evidence" value="ECO:0000318"/>
    <property type="project" value="GO_Central"/>
</dbReference>
<dbReference type="GO" id="GO:0060271">
    <property type="term" value="P:cilium assembly"/>
    <property type="evidence" value="ECO:0000315"/>
    <property type="project" value="UniProtKB"/>
</dbReference>
<dbReference type="GO" id="GO:2000147">
    <property type="term" value="P:positive regulation of cell motility"/>
    <property type="evidence" value="ECO:0000315"/>
    <property type="project" value="UniProtKB"/>
</dbReference>
<dbReference type="GO" id="GO:0060296">
    <property type="term" value="P:regulation of cilium beat frequency involved in ciliary motility"/>
    <property type="evidence" value="ECO:0000315"/>
    <property type="project" value="UniProtKB"/>
</dbReference>
<dbReference type="InterPro" id="IPR040441">
    <property type="entry name" value="CFA20/CFAP20DC"/>
</dbReference>
<dbReference type="InterPro" id="IPR007714">
    <property type="entry name" value="CFA20_dom"/>
</dbReference>
<dbReference type="PANTHER" id="PTHR12458">
    <property type="entry name" value="ORF PROTEIN"/>
    <property type="match status" value="1"/>
</dbReference>
<dbReference type="Pfam" id="PF05018">
    <property type="entry name" value="CFA20_dom"/>
    <property type="match status" value="1"/>
</dbReference>
<protein>
    <recommendedName>
        <fullName>Cilia- and flagella-associated protein 20</fullName>
        <shortName>Bug22p</shortName>
    </recommendedName>
</protein>
<gene>
    <name type="primary">CFAP20</name>
    <name type="synonym">Bug22</name>
    <name type="synonym">Bug22a</name>
    <name type="synonym">Bug22b</name>
    <name type="synonym">Bug22c</name>
    <name type="synonym">Bug22d</name>
    <name type="ORF">GSPATT00007012001</name>
    <name type="ORF">GSPATT00012810001</name>
    <name type="ORF">GSPATT00013199001</name>
    <name type="ORF">GSPATT00016658001</name>
</gene>
<accession>A0CDD4</accession>
<evidence type="ECO:0000250" key="1">
    <source>
        <dbReference type="UniProtKB" id="Q9Y6A4"/>
    </source>
</evidence>
<evidence type="ECO:0000269" key="2">
    <source>
    </source>
</evidence>
<evidence type="ECO:0000305" key="3"/>
<keyword id="KW-0966">Cell projection</keyword>
<keyword id="KW-0969">Cilium</keyword>
<keyword id="KW-0963">Cytoplasm</keyword>
<keyword id="KW-0206">Cytoskeleton</keyword>
<keyword id="KW-0493">Microtubule</keyword>
<keyword id="KW-1185">Reference proteome</keyword>